<accession>Q8C0S4</accession>
<accession>Q0HA37</accession>
<accession>Q3V0A2</accession>
<accession>Q9D5Q9</accession>
<sequence>MSSDDSSLMASIIYYSQEKYFHHVLQAANVGLERYSSDPALQFFRAYGILGEDHIHDAISELEGIQSHPDTSLCAVIALLSAHKSCDTIDIEAVQELESSLKEIRRSASSTALYYASLFLWFMGHHDKAREYVDHMLKVSSGSKEGYVLKGWVDLTSSKPHVVKKSIKYLEQGTQDTKDVLGLMGKATYFMTQQNFSGALEVANQVTLACSNFLPALVLKMKLFLARQDWDQTIETGQRILEKDENNIDAWQILAVHELVKEGNTDRAADRVRNLIKALETGEPHNPNLHLKKILVISRLCGRHQVVHRLVSGFLERIFMATPSCALVATELGYLFILHQQVKEACLWYKEAMKLEENRLAALAGSIWCQILQGQLEEAAHQLEFLKEVQQSLGKSELLVFLQALVAAKKQRLEQEATALLKEAVEVHFSSMQGLALSPEYFEKLDPLFLVCIAKEYLHFCPKQPRSPGQLVSPLLKQVAMILSPVVKVAPAMMEPLYVTAQVKFLSGELENAQSTLQRCLELDPTFVDAHLLMSQIYLAQGNFAMCSHCLELGVSHNFQVRDHPLYHFIKARALNKTGDYAEAIKTLKMIIKVPTSKAEEGRKSQSPSVRPSERASILLELVEALRLNGELHEATKIMQDAINEFSGTPEEMRITVANVDLALSKGNVDLALNMLRGITPKQPCYTEAKEKMASIYLHTRKDVRLYIGCYVELCEHLPGPHSSLLLGDAFMNIQEPEKALEVYDEAYRKNPHDASLVSRIGQAYVKTHQYAKAINYYEAAQKISGQDFLCCELAELLLKLKKYHKAEKVLKQALERDSGVKDIPSMINEVKCLLLLAKVYKSHKKEEVMETLNLALDLQSRILKRVPLEQSEMIPFQNQLAASICIQIGEHHLAEKDYDSALKSYKDALAYSPTDSKVVLELAHLYLLLGQLDLCEQRCAPLLEMEQTHERAAVMLADLMFRRQNYETAINLYHQVLEKAPDNFLVLNKLVDLLRRSGKLEEAPAFFELAKKVSSRVPLEPGFNYCQGIYFWHIGQPNEALRFLNKARKDSTWGQLATCYMVQICLNPDNEIVGGEAFESLVGDSNSASRKESQQHGVRTAEKLLREFYPHSESGQTQLRLLQNLCLLATREKANVEVALGAFIEMAQAEKDSIPALLAMAQAYILLKQVPKARTQLKRLAKVPWTVDEAEDLEKSWLLLADIYCQGGKFDLALELLRRCLQYNKSCCRAYEYMGFIMEKEQSYKDAATNYELAWKYSHQANPAIGFKLAFNYLKDKKFVDAIEVCHSVLTEHPKYPKIREEILEKAQGSLRP</sequence>
<comment type="function">
    <text evidence="2">Intraflagellar transport (IFT)-associated protein required for spermatogenesis (PubMed:30929735). Required for sperm flagellar formation and intraflagellar transport (PubMed:30929735).</text>
</comment>
<comment type="subunit">
    <text evidence="1 3">Interacts with IFT20 (By similarity). Interacts with IFT52 (By similarity). Interacts with IFT140 (By similarity). Interacts with CEP78; regulating IFT20 stability and localization (PubMed:36756949).</text>
</comment>
<comment type="alternative products">
    <event type="alternative splicing"/>
    <isoform>
        <id>Q8C0S4-1</id>
        <name>1</name>
        <sequence type="displayed"/>
    </isoform>
    <isoform>
        <id>Q8C0S4-2</id>
        <name>2</name>
        <sequence type="described" ref="VSP_026304 VSP_026305"/>
    </isoform>
</comment>
<comment type="disruption phenotype">
    <text evidence="2">Male mice display strongly reduced fertility (PubMed:30929735). Spermatozoa show significantly reduced motility and morphologic abnormalities are observed, such as primarily tailless spermatozoa with an abnormal head-tail junction, as well as short and coiled flagella (PubMed:30929735). Structural abnormalities of the connecting piece are observed during spermiogenesis and multiple structural defects of the flagella, with a greatly increased percentage of flagella exhibiting abnormal principal pieces and end pieces (PubMed:30929735). Axonemal structural abnormalities, such as abnormal bulges, extra peripheral microtubule doublets, lack of central-pair microtubules, absent dynein arms, and abnormal arrangement of the 9 peripheral microtubule doubles, are also frequently observed (PubMed:30929735).</text>
</comment>
<comment type="similarity">
    <text evidence="5">Belongs to the TTC21 family.</text>
</comment>
<dbReference type="EMBL" id="DQ011665">
    <property type="protein sequence ID" value="AAY78492.1"/>
    <property type="molecule type" value="mRNA"/>
</dbReference>
<dbReference type="EMBL" id="AK015017">
    <property type="protein sequence ID" value="BAB29674.1"/>
    <property type="molecule type" value="mRNA"/>
</dbReference>
<dbReference type="EMBL" id="AK029952">
    <property type="protein sequence ID" value="BAC26695.1"/>
    <property type="molecule type" value="mRNA"/>
</dbReference>
<dbReference type="EMBL" id="AK133304">
    <property type="protein sequence ID" value="BAE21602.1"/>
    <property type="molecule type" value="mRNA"/>
</dbReference>
<dbReference type="EMBL" id="BC133699">
    <property type="protein sequence ID" value="AAI33700.1"/>
    <property type="molecule type" value="mRNA"/>
</dbReference>
<dbReference type="CCDS" id="CCDS40805.1">
    <molecule id="Q8C0S4-1"/>
</dbReference>
<dbReference type="RefSeq" id="NP_083011.2">
    <molecule id="Q8C0S4-1"/>
    <property type="nucleotide sequence ID" value="NM_028735.3"/>
</dbReference>
<dbReference type="SMR" id="Q8C0S4"/>
<dbReference type="BioGRID" id="216453">
    <property type="interactions" value="3"/>
</dbReference>
<dbReference type="FunCoup" id="Q8C0S4">
    <property type="interactions" value="22"/>
</dbReference>
<dbReference type="STRING" id="10090.ENSMUSP00000035100"/>
<dbReference type="iPTMnet" id="Q8C0S4"/>
<dbReference type="PhosphoSitePlus" id="Q8C0S4"/>
<dbReference type="SwissPalm" id="Q8C0S4"/>
<dbReference type="PaxDb" id="10090-ENSMUSP00000035100"/>
<dbReference type="ProteomicsDB" id="297731">
    <molecule id="Q8C0S4-1"/>
</dbReference>
<dbReference type="ProteomicsDB" id="297732">
    <molecule id="Q8C0S4-2"/>
</dbReference>
<dbReference type="Antibodypedia" id="50732">
    <property type="antibodies" value="7 antibodies from 6 providers"/>
</dbReference>
<dbReference type="DNASU" id="74052"/>
<dbReference type="Ensembl" id="ENSMUST00000035100.6">
    <molecule id="Q8C0S4-1"/>
    <property type="protein sequence ID" value="ENSMUSP00000035100.6"/>
    <property type="gene ID" value="ENSMUSG00000032514.12"/>
</dbReference>
<dbReference type="GeneID" id="74052"/>
<dbReference type="KEGG" id="mmu:74052"/>
<dbReference type="UCSC" id="uc009sbs.1">
    <molecule id="Q8C0S4-2"/>
    <property type="organism name" value="mouse"/>
</dbReference>
<dbReference type="UCSC" id="uc009sbt.1">
    <molecule id="Q8C0S4-1"/>
    <property type="organism name" value="mouse"/>
</dbReference>
<dbReference type="AGR" id="MGI:1921302"/>
<dbReference type="CTD" id="199223"/>
<dbReference type="MGI" id="MGI:1921302">
    <property type="gene designation" value="Ttc21a"/>
</dbReference>
<dbReference type="VEuPathDB" id="HostDB:ENSMUSG00000032514"/>
<dbReference type="eggNOG" id="ENOG502QQAB">
    <property type="taxonomic scope" value="Eukaryota"/>
</dbReference>
<dbReference type="GeneTree" id="ENSGT00390000005979"/>
<dbReference type="HOGENOM" id="CLU_006149_0_0_1"/>
<dbReference type="InParanoid" id="Q8C0S4"/>
<dbReference type="OMA" id="QCPCLAG"/>
<dbReference type="OrthoDB" id="10259630at2759"/>
<dbReference type="PhylomeDB" id="Q8C0S4"/>
<dbReference type="TreeFam" id="TF314664"/>
<dbReference type="BioGRID-ORCS" id="74052">
    <property type="hits" value="2 hits in 76 CRISPR screens"/>
</dbReference>
<dbReference type="PRO" id="PR:Q8C0S4"/>
<dbReference type="Proteomes" id="UP000000589">
    <property type="component" value="Chromosome 9"/>
</dbReference>
<dbReference type="RNAct" id="Q8C0S4">
    <property type="molecule type" value="protein"/>
</dbReference>
<dbReference type="Bgee" id="ENSMUSG00000032514">
    <property type="expression patterns" value="Expressed in otolith organ and 43 other cell types or tissues"/>
</dbReference>
<dbReference type="GO" id="GO:0030317">
    <property type="term" value="P:flagellated sperm motility"/>
    <property type="evidence" value="ECO:0000315"/>
    <property type="project" value="UniProtKB"/>
</dbReference>
<dbReference type="GO" id="GO:0007286">
    <property type="term" value="P:spermatid development"/>
    <property type="evidence" value="ECO:0000315"/>
    <property type="project" value="UniProtKB"/>
</dbReference>
<dbReference type="FunFam" id="1.25.40.10:FF:000279">
    <property type="entry name" value="Tetratricopeptide repeat domain 21A"/>
    <property type="match status" value="1"/>
</dbReference>
<dbReference type="FunFam" id="1.25.40.10:FF:000775">
    <property type="entry name" value="Tetratricopeptide repeat domain 21A"/>
    <property type="match status" value="1"/>
</dbReference>
<dbReference type="FunFam" id="1.25.40.10:FF:000803">
    <property type="entry name" value="Tetratricopeptide repeat domain 21A"/>
    <property type="match status" value="1"/>
</dbReference>
<dbReference type="FunFam" id="1.25.40.10:FF:003660">
    <property type="entry name" value="Tetratricopeptide repeat domain 21A"/>
    <property type="match status" value="1"/>
</dbReference>
<dbReference type="FunFam" id="1.25.40.10:FF:000245">
    <property type="entry name" value="Tetratricopeptide repeat domain 21B"/>
    <property type="match status" value="1"/>
</dbReference>
<dbReference type="Gene3D" id="1.25.40.10">
    <property type="entry name" value="Tetratricopeptide repeat domain"/>
    <property type="match status" value="6"/>
</dbReference>
<dbReference type="InterPro" id="IPR056832">
    <property type="entry name" value="ARM_TT21_2nd"/>
</dbReference>
<dbReference type="InterPro" id="IPR056836">
    <property type="entry name" value="ARM_TT21_4th"/>
</dbReference>
<dbReference type="InterPro" id="IPR056835">
    <property type="entry name" value="ARM_TT21_5th"/>
</dbReference>
<dbReference type="InterPro" id="IPR056834">
    <property type="entry name" value="ARM_TT21_C"/>
</dbReference>
<dbReference type="InterPro" id="IPR056833">
    <property type="entry name" value="ARM_TT21_N"/>
</dbReference>
<dbReference type="InterPro" id="IPR011990">
    <property type="entry name" value="TPR-like_helical_dom_sf"/>
</dbReference>
<dbReference type="InterPro" id="IPR019734">
    <property type="entry name" value="TPR_rpt"/>
</dbReference>
<dbReference type="InterPro" id="IPR040364">
    <property type="entry name" value="TTC21A/TTC21B"/>
</dbReference>
<dbReference type="PANTHER" id="PTHR14699">
    <property type="entry name" value="STI2 PROTEIN-RELATED"/>
    <property type="match status" value="1"/>
</dbReference>
<dbReference type="PANTHER" id="PTHR14699:SF2">
    <property type="entry name" value="TETRATRICOPEPTIDE REPEAT PROTEIN 21A"/>
    <property type="match status" value="1"/>
</dbReference>
<dbReference type="Pfam" id="PF25058">
    <property type="entry name" value="ARM_TT21"/>
    <property type="match status" value="1"/>
</dbReference>
<dbReference type="Pfam" id="PF25060">
    <property type="entry name" value="ARM_TT21_2nd"/>
    <property type="match status" value="1"/>
</dbReference>
<dbReference type="Pfam" id="PF25068">
    <property type="entry name" value="ARM_TT21_4th"/>
    <property type="match status" value="1"/>
</dbReference>
<dbReference type="Pfam" id="PF25064">
    <property type="entry name" value="ARM_TT21_5th"/>
    <property type="match status" value="1"/>
</dbReference>
<dbReference type="Pfam" id="PF25063">
    <property type="entry name" value="ARM_TT21_C"/>
    <property type="match status" value="1"/>
</dbReference>
<dbReference type="Pfam" id="PF25062">
    <property type="entry name" value="ARM_TT21_N"/>
    <property type="match status" value="1"/>
</dbReference>
<dbReference type="SMART" id="SM00028">
    <property type="entry name" value="TPR"/>
    <property type="match status" value="14"/>
</dbReference>
<dbReference type="SUPFAM" id="SSF48452">
    <property type="entry name" value="TPR-like"/>
    <property type="match status" value="4"/>
</dbReference>
<dbReference type="PROSITE" id="PS50005">
    <property type="entry name" value="TPR"/>
    <property type="match status" value="11"/>
</dbReference>
<dbReference type="PROSITE" id="PS50293">
    <property type="entry name" value="TPR_REGION"/>
    <property type="match status" value="4"/>
</dbReference>
<name>TT21A_MOUSE</name>
<keyword id="KW-0025">Alternative splicing</keyword>
<keyword id="KW-0221">Differentiation</keyword>
<keyword id="KW-1185">Reference proteome</keyword>
<keyword id="KW-0677">Repeat</keyword>
<keyword id="KW-0744">Spermatogenesis</keyword>
<keyword id="KW-0802">TPR repeat</keyword>
<proteinExistence type="evidence at protein level"/>
<gene>
    <name type="primary">Ttc21a</name>
    <name type="synonym">Thm2</name>
</gene>
<protein>
    <recommendedName>
        <fullName>Tetratricopeptide repeat protein 21A</fullName>
        <shortName>TPR repeat protein 21A</shortName>
    </recommendedName>
    <alternativeName>
        <fullName>Tetratricopeptide repeat-containing hedgehog modulator 2</fullName>
    </alternativeName>
</protein>
<organism>
    <name type="scientific">Mus musculus</name>
    <name type="common">Mouse</name>
    <dbReference type="NCBI Taxonomy" id="10090"/>
    <lineage>
        <taxon>Eukaryota</taxon>
        <taxon>Metazoa</taxon>
        <taxon>Chordata</taxon>
        <taxon>Craniata</taxon>
        <taxon>Vertebrata</taxon>
        <taxon>Euteleostomi</taxon>
        <taxon>Mammalia</taxon>
        <taxon>Eutheria</taxon>
        <taxon>Euarchontoglires</taxon>
        <taxon>Glires</taxon>
        <taxon>Rodentia</taxon>
        <taxon>Myomorpha</taxon>
        <taxon>Muroidea</taxon>
        <taxon>Muridae</taxon>
        <taxon>Murinae</taxon>
        <taxon>Mus</taxon>
        <taxon>Mus</taxon>
    </lineage>
</organism>
<evidence type="ECO:0000250" key="1">
    <source>
        <dbReference type="UniProtKB" id="Q8NDW8"/>
    </source>
</evidence>
<evidence type="ECO:0000269" key="2">
    <source>
    </source>
</evidence>
<evidence type="ECO:0000269" key="3">
    <source>
    </source>
</evidence>
<evidence type="ECO:0000303" key="4">
    <source>
    </source>
</evidence>
<evidence type="ECO:0000305" key="5"/>
<feature type="chain" id="PRO_0000291916" description="Tetratricopeptide repeat protein 21A">
    <location>
        <begin position="1"/>
        <end position="1314"/>
    </location>
</feature>
<feature type="repeat" description="TPR 1">
    <location>
        <begin position="110"/>
        <end position="143"/>
    </location>
</feature>
<feature type="repeat" description="TPR 2">
    <location>
        <begin position="214"/>
        <end position="247"/>
    </location>
</feature>
<feature type="repeat" description="TPR 3">
    <location>
        <begin position="326"/>
        <end position="359"/>
    </location>
</feature>
<feature type="repeat" description="TPR 4">
    <location>
        <begin position="494"/>
        <end position="527"/>
    </location>
</feature>
<feature type="repeat" description="TPR 5">
    <location>
        <begin position="529"/>
        <end position="561"/>
    </location>
</feature>
<feature type="repeat" description="TPR 6">
    <location>
        <begin position="565"/>
        <end position="598"/>
    </location>
</feature>
<feature type="repeat" description="TPR 7">
    <location>
        <begin position="616"/>
        <end position="649"/>
    </location>
</feature>
<feature type="repeat" description="TPR 8">
    <location>
        <begin position="721"/>
        <end position="754"/>
    </location>
</feature>
<feature type="repeat" description="TPR 9">
    <location>
        <begin position="755"/>
        <end position="788"/>
    </location>
</feature>
<feature type="repeat" description="TPR 10">
    <location>
        <begin position="790"/>
        <end position="821"/>
    </location>
</feature>
<feature type="repeat" description="TPR 11">
    <location>
        <begin position="831"/>
        <end position="863"/>
    </location>
</feature>
<feature type="repeat" description="TPR 12">
    <location>
        <begin position="883"/>
        <end position="916"/>
    </location>
</feature>
<feature type="repeat" description="TPR 13">
    <location>
        <begin position="918"/>
        <end position="950"/>
    </location>
</feature>
<feature type="repeat" description="TPR 14">
    <location>
        <begin position="951"/>
        <end position="984"/>
    </location>
</feature>
<feature type="repeat" description="TPR 15">
    <location>
        <begin position="986"/>
        <end position="1018"/>
    </location>
</feature>
<feature type="repeat" description="TPR 16">
    <location>
        <begin position="1022"/>
        <end position="1055"/>
    </location>
</feature>
<feature type="repeat" description="TPR 17">
    <location>
        <begin position="1195"/>
        <end position="1228"/>
    </location>
</feature>
<feature type="repeat" description="TPR 18">
    <location>
        <begin position="1230"/>
        <end position="1262"/>
    </location>
</feature>
<feature type="repeat" description="TPR 19">
    <location>
        <begin position="1264"/>
        <end position="1297"/>
    </location>
</feature>
<feature type="splice variant" id="VSP_026304" description="In isoform 2." evidence="4">
    <original>SCCRAYE</original>
    <variation>AKLTSLG</variation>
    <location>
        <begin position="1227"/>
        <end position="1233"/>
    </location>
</feature>
<feature type="splice variant" id="VSP_026305" description="In isoform 2." evidence="4">
    <location>
        <begin position="1234"/>
        <end position="1314"/>
    </location>
</feature>
<feature type="sequence conflict" description="In Ref. 2; BAB29674." evidence="5" ref="2">
    <original>S</original>
    <variation>N</variation>
    <location>
        <position position="16"/>
    </location>
</feature>
<feature type="sequence conflict" description="In Ref. 2; BAC26695." evidence="5" ref="2">
    <original>L</original>
    <variation>M</variation>
    <location>
        <position position="208"/>
    </location>
</feature>
<feature type="sequence conflict" description="In Ref. 1; AAY78492 and 3; AAI33700." evidence="5" ref="1 3">
    <original>P</original>
    <variation>L</variation>
    <location>
        <position position="650"/>
    </location>
</feature>
<feature type="sequence conflict" description="In Ref. 2; BAE21602." evidence="5" ref="2">
    <original>Q</original>
    <variation>K</variation>
    <location>
        <position position="1037"/>
    </location>
</feature>
<reference key="1">
    <citation type="submission" date="2005-04" db="EMBL/GenBank/DDBJ databases">
        <title>Thm1 is a novel negative regulator of mouse Sonic hedgehog signaling.</title>
        <authorList>
            <person name="Tran P.V."/>
            <person name="Herron B.J."/>
            <person name="Scherz P.J."/>
            <person name="Qiu H."/>
            <person name="Turbe-Doan A."/>
            <person name="Parker K."/>
            <person name="Beier D.R."/>
        </authorList>
    </citation>
    <scope>NUCLEOTIDE SEQUENCE [MRNA] (ISOFORM 1)</scope>
    <source>
        <strain>A/J</strain>
    </source>
</reference>
<reference key="2">
    <citation type="journal article" date="2005" name="Science">
        <title>The transcriptional landscape of the mammalian genome.</title>
        <authorList>
            <person name="Carninci P."/>
            <person name="Kasukawa T."/>
            <person name="Katayama S."/>
            <person name="Gough J."/>
            <person name="Frith M.C."/>
            <person name="Maeda N."/>
            <person name="Oyama R."/>
            <person name="Ravasi T."/>
            <person name="Lenhard B."/>
            <person name="Wells C."/>
            <person name="Kodzius R."/>
            <person name="Shimokawa K."/>
            <person name="Bajic V.B."/>
            <person name="Brenner S.E."/>
            <person name="Batalov S."/>
            <person name="Forrest A.R."/>
            <person name="Zavolan M."/>
            <person name="Davis M.J."/>
            <person name="Wilming L.G."/>
            <person name="Aidinis V."/>
            <person name="Allen J.E."/>
            <person name="Ambesi-Impiombato A."/>
            <person name="Apweiler R."/>
            <person name="Aturaliya R.N."/>
            <person name="Bailey T.L."/>
            <person name="Bansal M."/>
            <person name="Baxter L."/>
            <person name="Beisel K.W."/>
            <person name="Bersano T."/>
            <person name="Bono H."/>
            <person name="Chalk A.M."/>
            <person name="Chiu K.P."/>
            <person name="Choudhary V."/>
            <person name="Christoffels A."/>
            <person name="Clutterbuck D.R."/>
            <person name="Crowe M.L."/>
            <person name="Dalla E."/>
            <person name="Dalrymple B.P."/>
            <person name="de Bono B."/>
            <person name="Della Gatta G."/>
            <person name="di Bernardo D."/>
            <person name="Down T."/>
            <person name="Engstrom P."/>
            <person name="Fagiolini M."/>
            <person name="Faulkner G."/>
            <person name="Fletcher C.F."/>
            <person name="Fukushima T."/>
            <person name="Furuno M."/>
            <person name="Futaki S."/>
            <person name="Gariboldi M."/>
            <person name="Georgii-Hemming P."/>
            <person name="Gingeras T.R."/>
            <person name="Gojobori T."/>
            <person name="Green R.E."/>
            <person name="Gustincich S."/>
            <person name="Harbers M."/>
            <person name="Hayashi Y."/>
            <person name="Hensch T.K."/>
            <person name="Hirokawa N."/>
            <person name="Hill D."/>
            <person name="Huminiecki L."/>
            <person name="Iacono M."/>
            <person name="Ikeo K."/>
            <person name="Iwama A."/>
            <person name="Ishikawa T."/>
            <person name="Jakt M."/>
            <person name="Kanapin A."/>
            <person name="Katoh M."/>
            <person name="Kawasawa Y."/>
            <person name="Kelso J."/>
            <person name="Kitamura H."/>
            <person name="Kitano H."/>
            <person name="Kollias G."/>
            <person name="Krishnan S.P."/>
            <person name="Kruger A."/>
            <person name="Kummerfeld S.K."/>
            <person name="Kurochkin I.V."/>
            <person name="Lareau L.F."/>
            <person name="Lazarevic D."/>
            <person name="Lipovich L."/>
            <person name="Liu J."/>
            <person name="Liuni S."/>
            <person name="McWilliam S."/>
            <person name="Madan Babu M."/>
            <person name="Madera M."/>
            <person name="Marchionni L."/>
            <person name="Matsuda H."/>
            <person name="Matsuzawa S."/>
            <person name="Miki H."/>
            <person name="Mignone F."/>
            <person name="Miyake S."/>
            <person name="Morris K."/>
            <person name="Mottagui-Tabar S."/>
            <person name="Mulder N."/>
            <person name="Nakano N."/>
            <person name="Nakauchi H."/>
            <person name="Ng P."/>
            <person name="Nilsson R."/>
            <person name="Nishiguchi S."/>
            <person name="Nishikawa S."/>
            <person name="Nori F."/>
            <person name="Ohara O."/>
            <person name="Okazaki Y."/>
            <person name="Orlando V."/>
            <person name="Pang K.C."/>
            <person name="Pavan W.J."/>
            <person name="Pavesi G."/>
            <person name="Pesole G."/>
            <person name="Petrovsky N."/>
            <person name="Piazza S."/>
            <person name="Reed J."/>
            <person name="Reid J.F."/>
            <person name="Ring B.Z."/>
            <person name="Ringwald M."/>
            <person name="Rost B."/>
            <person name="Ruan Y."/>
            <person name="Salzberg S.L."/>
            <person name="Sandelin A."/>
            <person name="Schneider C."/>
            <person name="Schoenbach C."/>
            <person name="Sekiguchi K."/>
            <person name="Semple C.A."/>
            <person name="Seno S."/>
            <person name="Sessa L."/>
            <person name="Sheng Y."/>
            <person name="Shibata Y."/>
            <person name="Shimada H."/>
            <person name="Shimada K."/>
            <person name="Silva D."/>
            <person name="Sinclair B."/>
            <person name="Sperling S."/>
            <person name="Stupka E."/>
            <person name="Sugiura K."/>
            <person name="Sultana R."/>
            <person name="Takenaka Y."/>
            <person name="Taki K."/>
            <person name="Tammoja K."/>
            <person name="Tan S.L."/>
            <person name="Tang S."/>
            <person name="Taylor M.S."/>
            <person name="Tegner J."/>
            <person name="Teichmann S.A."/>
            <person name="Ueda H.R."/>
            <person name="van Nimwegen E."/>
            <person name="Verardo R."/>
            <person name="Wei C.L."/>
            <person name="Yagi K."/>
            <person name="Yamanishi H."/>
            <person name="Zabarovsky E."/>
            <person name="Zhu S."/>
            <person name="Zimmer A."/>
            <person name="Hide W."/>
            <person name="Bult C."/>
            <person name="Grimmond S.M."/>
            <person name="Teasdale R.D."/>
            <person name="Liu E.T."/>
            <person name="Brusic V."/>
            <person name="Quackenbush J."/>
            <person name="Wahlestedt C."/>
            <person name="Mattick J.S."/>
            <person name="Hume D.A."/>
            <person name="Kai C."/>
            <person name="Sasaki D."/>
            <person name="Tomaru Y."/>
            <person name="Fukuda S."/>
            <person name="Kanamori-Katayama M."/>
            <person name="Suzuki M."/>
            <person name="Aoki J."/>
            <person name="Arakawa T."/>
            <person name="Iida J."/>
            <person name="Imamura K."/>
            <person name="Itoh M."/>
            <person name="Kato T."/>
            <person name="Kawaji H."/>
            <person name="Kawagashira N."/>
            <person name="Kawashima T."/>
            <person name="Kojima M."/>
            <person name="Kondo S."/>
            <person name="Konno H."/>
            <person name="Nakano K."/>
            <person name="Ninomiya N."/>
            <person name="Nishio T."/>
            <person name="Okada M."/>
            <person name="Plessy C."/>
            <person name="Shibata K."/>
            <person name="Shiraki T."/>
            <person name="Suzuki S."/>
            <person name="Tagami M."/>
            <person name="Waki K."/>
            <person name="Watahiki A."/>
            <person name="Okamura-Oho Y."/>
            <person name="Suzuki H."/>
            <person name="Kawai J."/>
            <person name="Hayashizaki Y."/>
        </authorList>
    </citation>
    <scope>NUCLEOTIDE SEQUENCE [LARGE SCALE MRNA] (ISOFORMS 1 AND 2)</scope>
    <source>
        <strain>C57BL/6J</strain>
        <tissue>Testis</tissue>
    </source>
</reference>
<reference key="3">
    <citation type="journal article" date="2004" name="Genome Res.">
        <title>The status, quality, and expansion of the NIH full-length cDNA project: the Mammalian Gene Collection (MGC).</title>
        <authorList>
            <consortium name="The MGC Project Team"/>
        </authorList>
    </citation>
    <scope>NUCLEOTIDE SEQUENCE [LARGE SCALE MRNA] (ISOFORM 1)</scope>
</reference>
<reference key="4">
    <citation type="journal article" date="2010" name="Cell">
        <title>A tissue-specific atlas of mouse protein phosphorylation and expression.</title>
        <authorList>
            <person name="Huttlin E.L."/>
            <person name="Jedrychowski M.P."/>
            <person name="Elias J.E."/>
            <person name="Goswami T."/>
            <person name="Rad R."/>
            <person name="Beausoleil S.A."/>
            <person name="Villen J."/>
            <person name="Haas W."/>
            <person name="Sowa M.E."/>
            <person name="Gygi S.P."/>
        </authorList>
    </citation>
    <scope>IDENTIFICATION BY MASS SPECTROMETRY [LARGE SCALE ANALYSIS]</scope>
    <source>
        <tissue>Testis</tissue>
    </source>
</reference>
<reference key="5">
    <citation type="journal article" date="2019" name="Am. J. Hum. Genet.">
        <title>Bi-allelic mutations in TTC21A induce asthenoteratospermia in humans and mice.</title>
        <authorList>
            <person name="Liu W."/>
            <person name="He X."/>
            <person name="Yang S."/>
            <person name="Zouari R."/>
            <person name="Wang J."/>
            <person name="Wu H."/>
            <person name="Kherraf Z.E."/>
            <person name="Liu C."/>
            <person name="Coutton C."/>
            <person name="Zhao R."/>
            <person name="Tang D."/>
            <person name="Tang S."/>
            <person name="Lv M."/>
            <person name="Fang Y."/>
            <person name="Li W."/>
            <person name="Li H."/>
            <person name="Zhao J."/>
            <person name="Wang X."/>
            <person name="Zhao S."/>
            <person name="Zhang J."/>
            <person name="Arnoult C."/>
            <person name="Jin L."/>
            <person name="Zhang Z."/>
            <person name="Ray P.F."/>
            <person name="Cao Y."/>
            <person name="Zhang F."/>
        </authorList>
    </citation>
    <scope>FUNCTION</scope>
    <scope>DISRUPTION PHENOTYPE</scope>
</reference>
<reference key="6">
    <citation type="journal article" date="2023" name="Elife">
        <title>Absence of CEP78 causes photoreceptor and sperm flagella impairments in mice and a human individual.</title>
        <authorList>
            <person name="Zhu T."/>
            <person name="Zhang Y."/>
            <person name="Sheng X."/>
            <person name="Zhang X."/>
            <person name="Chen Y."/>
            <person name="Zhu H."/>
            <person name="Guo Y."/>
            <person name="Qi Y."/>
            <person name="Zhao Y."/>
            <person name="Zhou Q."/>
            <person name="Chen X."/>
            <person name="Guo X."/>
            <person name="Zhao C."/>
        </authorList>
    </citation>
    <scope>INTERACTION WITH CEP78</scope>
</reference>